<proteinExistence type="inferred from homology"/>
<comment type="function">
    <text evidence="1">Peptidoglycan polymerase that catalyzes glycan chain elongation using lipid-linked disaccharide-pentapeptide as the substrate.</text>
</comment>
<comment type="catalytic activity">
    <reaction evidence="1">
        <text>[GlcNAc-(1-&gt;4)-Mur2Ac(oyl-L-Ala-gamma-D-Glu-L-Lys-D-Ala-D-Ala)](n)-di-trans,octa-cis-undecaprenyl diphosphate + beta-D-GlcNAc-(1-&gt;4)-Mur2Ac(oyl-L-Ala-gamma-D-Glu-L-Lys-D-Ala-D-Ala)-di-trans,octa-cis-undecaprenyl diphosphate = [GlcNAc-(1-&gt;4)-Mur2Ac(oyl-L-Ala-gamma-D-Glu-L-Lys-D-Ala-D-Ala)](n+1)-di-trans,octa-cis-undecaprenyl diphosphate + di-trans,octa-cis-undecaprenyl diphosphate + H(+)</text>
        <dbReference type="Rhea" id="RHEA:23708"/>
        <dbReference type="Rhea" id="RHEA-COMP:9602"/>
        <dbReference type="Rhea" id="RHEA-COMP:9603"/>
        <dbReference type="ChEBI" id="CHEBI:15378"/>
        <dbReference type="ChEBI" id="CHEBI:58405"/>
        <dbReference type="ChEBI" id="CHEBI:60033"/>
        <dbReference type="ChEBI" id="CHEBI:78435"/>
        <dbReference type="EC" id="2.4.99.28"/>
    </reaction>
</comment>
<comment type="pathway">
    <text evidence="1">Cell wall biogenesis; peptidoglycan biosynthesis.</text>
</comment>
<comment type="subcellular location">
    <subcellularLocation>
        <location evidence="1">Cell membrane</location>
        <topology evidence="1">Single-pass membrane protein</topology>
    </subcellularLocation>
</comment>
<comment type="similarity">
    <text evidence="1">Belongs to the glycosyltransferase 51 family.</text>
</comment>
<evidence type="ECO:0000255" key="1">
    <source>
        <dbReference type="HAMAP-Rule" id="MF_01434"/>
    </source>
</evidence>
<sequence>MKRSDKYTDDYIEQRYESQRPHYNTYYQPIGKPPKKKKSKRIFLKAIITILILLIIFFGVMYFISSRANVDDLKSIENKSDFVATENMPNYVKGAFISMEDERFYKHHGFDIKGTTRALFSTISDRDVQGGSTITQQVVKNYYYDNERSFTRKIKELFVARKVEKQYSKNQILSFYMNNIYYGDNQYTVEGAANHYFGVTVDKNNSNMSQISVLQSAILASKVNAPSVYDVNDMSNNYINRVKTNLEKMKQQNFISESQYQEAMSQLGN</sequence>
<organism>
    <name type="scientific">Staphylococcus epidermidis (strain ATCC 35984 / DSM 28319 / BCRC 17069 / CCUG 31568 / BM 3577 / RP62A)</name>
    <dbReference type="NCBI Taxonomy" id="176279"/>
    <lineage>
        <taxon>Bacteria</taxon>
        <taxon>Bacillati</taxon>
        <taxon>Bacillota</taxon>
        <taxon>Bacilli</taxon>
        <taxon>Bacillales</taxon>
        <taxon>Staphylococcaceae</taxon>
        <taxon>Staphylococcus</taxon>
    </lineage>
</organism>
<dbReference type="EC" id="2.4.99.28" evidence="1"/>
<dbReference type="EMBL" id="CP000029">
    <property type="protein sequence ID" value="AAW54769.1"/>
    <property type="molecule type" value="Genomic_DNA"/>
</dbReference>
<dbReference type="SMR" id="Q5HN60"/>
<dbReference type="STRING" id="176279.SERP1412"/>
<dbReference type="CAZy" id="GT51">
    <property type="family name" value="Glycosyltransferase Family 51"/>
</dbReference>
<dbReference type="KEGG" id="ser:SERP1412"/>
<dbReference type="eggNOG" id="COG0744">
    <property type="taxonomic scope" value="Bacteria"/>
</dbReference>
<dbReference type="HOGENOM" id="CLU_006354_1_2_9"/>
<dbReference type="UniPathway" id="UPA00219"/>
<dbReference type="Proteomes" id="UP000000531">
    <property type="component" value="Chromosome"/>
</dbReference>
<dbReference type="GO" id="GO:0030288">
    <property type="term" value="C:outer membrane-bounded periplasmic space"/>
    <property type="evidence" value="ECO:0007669"/>
    <property type="project" value="TreeGrafter"/>
</dbReference>
<dbReference type="GO" id="GO:0005886">
    <property type="term" value="C:plasma membrane"/>
    <property type="evidence" value="ECO:0007669"/>
    <property type="project" value="UniProtKB-SubCell"/>
</dbReference>
<dbReference type="GO" id="GO:0008955">
    <property type="term" value="F:peptidoglycan glycosyltransferase activity"/>
    <property type="evidence" value="ECO:0007669"/>
    <property type="project" value="UniProtKB-UniRule"/>
</dbReference>
<dbReference type="GO" id="GO:0071555">
    <property type="term" value="P:cell wall organization"/>
    <property type="evidence" value="ECO:0007669"/>
    <property type="project" value="UniProtKB-KW"/>
</dbReference>
<dbReference type="GO" id="GO:0009252">
    <property type="term" value="P:peptidoglycan biosynthetic process"/>
    <property type="evidence" value="ECO:0007669"/>
    <property type="project" value="UniProtKB-UniRule"/>
</dbReference>
<dbReference type="GO" id="GO:0008360">
    <property type="term" value="P:regulation of cell shape"/>
    <property type="evidence" value="ECO:0007669"/>
    <property type="project" value="UniProtKB-KW"/>
</dbReference>
<dbReference type="Gene3D" id="1.10.3810.10">
    <property type="entry name" value="Biosynthetic peptidoglycan transglycosylase-like"/>
    <property type="match status" value="1"/>
</dbReference>
<dbReference type="HAMAP" id="MF_01434">
    <property type="entry name" value="MGT"/>
    <property type="match status" value="1"/>
</dbReference>
<dbReference type="InterPro" id="IPR001264">
    <property type="entry name" value="Glyco_trans_51"/>
</dbReference>
<dbReference type="InterPro" id="IPR050396">
    <property type="entry name" value="Glycosyltr_51/Transpeptidase"/>
</dbReference>
<dbReference type="InterPro" id="IPR023346">
    <property type="entry name" value="Lysozyme-like_dom_sf"/>
</dbReference>
<dbReference type="InterPro" id="IPR022978">
    <property type="entry name" value="Monofunct_glyco_trans"/>
</dbReference>
<dbReference type="InterPro" id="IPR036950">
    <property type="entry name" value="PBP_transglycosylase"/>
</dbReference>
<dbReference type="NCBIfam" id="NF010008">
    <property type="entry name" value="PRK13481.1"/>
    <property type="match status" value="1"/>
</dbReference>
<dbReference type="PANTHER" id="PTHR32282">
    <property type="entry name" value="BINDING PROTEIN TRANSPEPTIDASE, PUTATIVE-RELATED"/>
    <property type="match status" value="1"/>
</dbReference>
<dbReference type="PANTHER" id="PTHR32282:SF32">
    <property type="entry name" value="PENICILLIN-BINDING PROTEIN 2A"/>
    <property type="match status" value="1"/>
</dbReference>
<dbReference type="Pfam" id="PF00912">
    <property type="entry name" value="Transgly"/>
    <property type="match status" value="1"/>
</dbReference>
<dbReference type="SUPFAM" id="SSF53955">
    <property type="entry name" value="Lysozyme-like"/>
    <property type="match status" value="1"/>
</dbReference>
<accession>Q5HN60</accession>
<protein>
    <recommendedName>
        <fullName evidence="1">Monofunctional glycosyltransferase</fullName>
        <shortName evidence="1">MGT</shortName>
        <ecNumber evidence="1">2.4.99.28</ecNumber>
    </recommendedName>
    <alternativeName>
        <fullName evidence="1">Peptidoglycan TGase</fullName>
    </alternativeName>
</protein>
<gene>
    <name evidence="1" type="primary">mgt</name>
    <name type="ordered locus">SERP1412</name>
</gene>
<keyword id="KW-1003">Cell membrane</keyword>
<keyword id="KW-0133">Cell shape</keyword>
<keyword id="KW-0961">Cell wall biogenesis/degradation</keyword>
<keyword id="KW-0328">Glycosyltransferase</keyword>
<keyword id="KW-0472">Membrane</keyword>
<keyword id="KW-0573">Peptidoglycan synthesis</keyword>
<keyword id="KW-1185">Reference proteome</keyword>
<keyword id="KW-0808">Transferase</keyword>
<keyword id="KW-0812">Transmembrane</keyword>
<keyword id="KW-1133">Transmembrane helix</keyword>
<feature type="chain" id="PRO_0000083159" description="Monofunctional glycosyltransferase">
    <location>
        <begin position="1"/>
        <end position="269"/>
    </location>
</feature>
<feature type="transmembrane region" description="Helical" evidence="1">
    <location>
        <begin position="46"/>
        <end position="66"/>
    </location>
</feature>
<reference key="1">
    <citation type="journal article" date="2005" name="J. Bacteriol.">
        <title>Insights on evolution of virulence and resistance from the complete genome analysis of an early methicillin-resistant Staphylococcus aureus strain and a biofilm-producing methicillin-resistant Staphylococcus epidermidis strain.</title>
        <authorList>
            <person name="Gill S.R."/>
            <person name="Fouts D.E."/>
            <person name="Archer G.L."/>
            <person name="Mongodin E.F."/>
            <person name="DeBoy R.T."/>
            <person name="Ravel J."/>
            <person name="Paulsen I.T."/>
            <person name="Kolonay J.F."/>
            <person name="Brinkac L.M."/>
            <person name="Beanan M.J."/>
            <person name="Dodson R.J."/>
            <person name="Daugherty S.C."/>
            <person name="Madupu R."/>
            <person name="Angiuoli S.V."/>
            <person name="Durkin A.S."/>
            <person name="Haft D.H."/>
            <person name="Vamathevan J.J."/>
            <person name="Khouri H."/>
            <person name="Utterback T.R."/>
            <person name="Lee C."/>
            <person name="Dimitrov G."/>
            <person name="Jiang L."/>
            <person name="Qin H."/>
            <person name="Weidman J."/>
            <person name="Tran K."/>
            <person name="Kang K.H."/>
            <person name="Hance I.R."/>
            <person name="Nelson K.E."/>
            <person name="Fraser C.M."/>
        </authorList>
    </citation>
    <scope>NUCLEOTIDE SEQUENCE [LARGE SCALE GENOMIC DNA]</scope>
    <source>
        <strain>ATCC 35984 / DSM 28319 / BCRC 17069 / CCUG 31568 / BM 3577 / RP62A</strain>
    </source>
</reference>
<name>MGT_STAEQ</name>